<accession>P56953</accession>
<keyword id="KW-0749">Sporulation</keyword>
<keyword id="KW-0800">Toxin</keyword>
<keyword id="KW-0843">Virulence</keyword>
<proteinExistence type="evidence at transcript level"/>
<dbReference type="EMBL" id="M97880">
    <property type="status" value="NOT_ANNOTATED_CDS"/>
    <property type="molecule type" value="Genomic_DNA"/>
</dbReference>
<dbReference type="PIR" id="A48970">
    <property type="entry name" value="A48970"/>
</dbReference>
<dbReference type="RefSeq" id="WP_033698561.1">
    <property type="nucleotide sequence ID" value="NZ_PGDZ01000245.1"/>
</dbReference>
<dbReference type="SMR" id="P56953"/>
<dbReference type="GO" id="GO:0005102">
    <property type="term" value="F:signaling receptor binding"/>
    <property type="evidence" value="ECO:0007669"/>
    <property type="project" value="InterPro"/>
</dbReference>
<dbReference type="GO" id="GO:0090729">
    <property type="term" value="F:toxin activity"/>
    <property type="evidence" value="ECO:0007669"/>
    <property type="project" value="UniProtKB-KW"/>
</dbReference>
<dbReference type="GO" id="GO:0030435">
    <property type="term" value="P:sporulation resulting in formation of a cellular spore"/>
    <property type="evidence" value="ECO:0007669"/>
    <property type="project" value="UniProtKB-KW"/>
</dbReference>
<dbReference type="GO" id="GO:0001907">
    <property type="term" value="P:symbiont-mediated killing of host cell"/>
    <property type="evidence" value="ECO:0007669"/>
    <property type="project" value="InterPro"/>
</dbReference>
<dbReference type="CDD" id="cd04085">
    <property type="entry name" value="delta_endotoxin_C"/>
    <property type="match status" value="1"/>
</dbReference>
<dbReference type="Gene3D" id="2.60.120.260">
    <property type="entry name" value="Galactose-binding domain-like"/>
    <property type="match status" value="1"/>
</dbReference>
<dbReference type="Gene3D" id="2.100.10.10">
    <property type="entry name" value="Pesticidal crystal protein, central domain"/>
    <property type="match status" value="1"/>
</dbReference>
<dbReference type="Gene3D" id="1.20.190.10">
    <property type="entry name" value="Pesticidal crystal protein, N-terminal domain"/>
    <property type="match status" value="1"/>
</dbReference>
<dbReference type="InterPro" id="IPR048645">
    <property type="entry name" value="Cry1Ac-like_dom-VII"/>
</dbReference>
<dbReference type="InterPro" id="IPR041587">
    <property type="entry name" value="Cry_V"/>
</dbReference>
<dbReference type="InterPro" id="IPR008979">
    <property type="entry name" value="Galactose-bd-like_sf"/>
</dbReference>
<dbReference type="InterPro" id="IPR038979">
    <property type="entry name" value="Pest_crys"/>
</dbReference>
<dbReference type="InterPro" id="IPR054544">
    <property type="entry name" value="Pest_crys_Cry1Aa_dom-IV"/>
</dbReference>
<dbReference type="InterPro" id="IPR005638">
    <property type="entry name" value="Pest_crys_dom-III"/>
</dbReference>
<dbReference type="InterPro" id="IPR005639">
    <property type="entry name" value="Pest_crys_dom_I"/>
</dbReference>
<dbReference type="InterPro" id="IPR036716">
    <property type="entry name" value="Pest_crys_N_sf"/>
</dbReference>
<dbReference type="InterPro" id="IPR036399">
    <property type="entry name" value="Pest_cryst_cen_dom_sf"/>
</dbReference>
<dbReference type="InterPro" id="IPR001178">
    <property type="entry name" value="Pest_cryst_dom_II"/>
</dbReference>
<dbReference type="PANTHER" id="PTHR37003">
    <property type="entry name" value="ENDOTOXIN_N DOMAIN-CONTAINING PROTEIN-RELATED"/>
    <property type="match status" value="1"/>
</dbReference>
<dbReference type="PANTHER" id="PTHR37003:SF2">
    <property type="entry name" value="PESTICIDAL CRYSTAL PROTEIN N-TERMINAL DOMAIN-CONTAINING PROTEIN"/>
    <property type="match status" value="1"/>
</dbReference>
<dbReference type="Pfam" id="PF17997">
    <property type="entry name" value="Cry1Ac_D5"/>
    <property type="match status" value="1"/>
</dbReference>
<dbReference type="Pfam" id="PF21463">
    <property type="entry name" value="Cry1Ac_dom-VII"/>
    <property type="match status" value="1"/>
</dbReference>
<dbReference type="Pfam" id="PF03944">
    <property type="entry name" value="Endotoxin_C"/>
    <property type="match status" value="1"/>
</dbReference>
<dbReference type="Pfam" id="PF18449">
    <property type="entry name" value="Endotoxin_C2"/>
    <property type="match status" value="1"/>
</dbReference>
<dbReference type="Pfam" id="PF00555">
    <property type="entry name" value="Endotoxin_M"/>
    <property type="match status" value="1"/>
</dbReference>
<dbReference type="Pfam" id="PF03945">
    <property type="entry name" value="Endotoxin_N"/>
    <property type="match status" value="1"/>
</dbReference>
<dbReference type="SUPFAM" id="SSF51096">
    <property type="entry name" value="delta-Endotoxin (insectocide), middle domain"/>
    <property type="match status" value="1"/>
</dbReference>
<dbReference type="SUPFAM" id="SSF56849">
    <property type="entry name" value="delta-Endotoxin (insectocide), N-terminal domain"/>
    <property type="match status" value="1"/>
</dbReference>
<dbReference type="SUPFAM" id="SSF49785">
    <property type="entry name" value="Galactose-binding domain-like"/>
    <property type="match status" value="1"/>
</dbReference>
<reference key="1">
    <citation type="journal article" date="1993" name="Appl. Environ. Microbiol.">
        <title>Cloning a novel cryIC-type gene from a strain of Bacillus thuringiensis galleriae.</title>
        <authorList>
            <person name="Kalman S.S."/>
        </authorList>
    </citation>
    <scope>NUCLEOTIDE SEQUENCE [GENOMIC DNA]</scope>
    <source>
        <strain>HD-29</strain>
    </source>
</reference>
<organism>
    <name type="scientific">Bacillus thuringiensis subsp. galleriae</name>
    <dbReference type="NCBI Taxonomy" id="29338"/>
    <lineage>
        <taxon>Bacteria</taxon>
        <taxon>Bacillati</taxon>
        <taxon>Bacillota</taxon>
        <taxon>Bacilli</taxon>
        <taxon>Bacillales</taxon>
        <taxon>Bacillaceae</taxon>
        <taxon>Bacillus</taxon>
        <taxon>Bacillus cereus group</taxon>
    </lineage>
</organism>
<feature type="chain" id="PRO_0000174037" description="Pesticidal crystal protein Cry1Cb">
    <location>
        <begin position="1"/>
        <end position="1176"/>
    </location>
</feature>
<sequence length="1176" mass="132868">MENNIQNQCVPYNCLSNPEEILLDGERISTGNSSIDISLSLVQLLVSNFVPGGGFLVGLLDFVWGIVGPSPWDAFLVQIEQLINERIAAYARSAAISNLEGLGNNFNIYVEAFKEWEADPDNPVTRTRVVDRFRILDGLLERDIPSFRIAGFEVPLLSVYAQAANLHLAILRDSSIFGARWGLTTINVNENYNRLIRHIDEYANHCADTYNRGLNNLPKSTYQDWITYNRLRRDLTLTVLDIAAFFPSYDNRRYPIQSVGQLTREIYTDPLITFNPQLQSVAQLPTFNVMESNAIRTPHLFDVLNNLTIFTDWFSVGRNFYWGGHRVISNRIGGGNITSPIYGREANQEPPRSFTFNGPVFRTLSNPTFRPLQQPWPAPPFNLRGVEGVEFSTPLNSFTYRGRGTVDSLTELPPEDNSVPPREGYSHRLCHATFVQRSGTPFLTTGPVFSWTHRSATDRNIIYPDVINQIPLVKAFNLTSGTSVVRGPGFTGGDIIRTNVNGSVLSMSLNFSNTTLQRYRVRVRYAASQTMVMSVTVGGSTTGNQGFPSTMSANGALTSQSFRFAEFPVGISASGSQGASISISNNVGRQMFHLDRIEFLPVTSTFEEEYDLERAQEAVNALFTSTNQLGLKTDVTDYHIDQVSNLVECLSDEFCLDEKRELSEKVKHAKRLSDERNLLQDRNFRSINGQLDRGWRGSTDITIQGGDDVFKENYVTLPGTFDECYPTYLYQKIDESKLKSYTRYELRGYIEDSQDLEIYLIRYNAKHEIVNVPGTGSLWPLSIENSIGPCGEPNRCAPHLEWNPNLDCSCRDGEKCAHHSHHFSLDIDVGCTDLNEDLGVWVIFKIKTQDGHARLGNLEFLEEKPLLGEALARVKRAEKKWRDKREKLEWETNIVYKEAKESVDALFVNSQYDRLQADTNIAMIHAADKRVHRIREAYLPELSVIPGVNAGIFEELEGRIFTAYSLYDARNVIKNGDFNNGLLCWNLKGHVDVEEQNNHRSVLVVPEWEAEVSQEVRVCPGRGYILRVTAYKEGYGEGCVTIHEIEDNTDELKFSNCVEEEVYPNNTVTCNDYTATQEEYGGAYTSRNHGYGKSYESNSSVQADYASVYEEKADTDGRRDNHCESNRGYGDYTPLPAGYVTKELEYFPETDKVWVEIGETEGTFIVDSVELLLMEE</sequence>
<protein>
    <recommendedName>
        <fullName>Pesticidal crystal protein Cry1Cb</fullName>
    </recommendedName>
    <alternativeName>
        <fullName>133 kDa crystal protein</fullName>
    </alternativeName>
    <alternativeName>
        <fullName>Crystaline entomocidal protoxin</fullName>
    </alternativeName>
    <alternativeName>
        <fullName>Insecticidal delta-endotoxin CryIC(b)</fullName>
    </alternativeName>
</protein>
<comment type="function">
    <text>Promotes colloidosmotic lysis by binding to the midgut epithelial cells of insects. Toxic to Spodoptera exigua and Trichoplusia ni.</text>
</comment>
<comment type="developmental stage">
    <text>The crystal protein is produced during sporulation and is accumulated both as an inclusion and as part of the spore coat.</text>
</comment>
<comment type="miscellaneous">
    <text>Toxic segment of the protein is located in the N-terminus.</text>
</comment>
<comment type="similarity">
    <text evidence="1">Belongs to the delta endotoxin family.</text>
</comment>
<evidence type="ECO:0000305" key="1"/>
<gene>
    <name type="primary">cry1Cb</name>
    <name type="synonym">cryIC(b)</name>
</gene>
<name>CR1CB_BACTG</name>